<reference key="1">
    <citation type="journal article" date="2005" name="Science">
        <title>The transcriptional landscape of the mammalian genome.</title>
        <authorList>
            <person name="Carninci P."/>
            <person name="Kasukawa T."/>
            <person name="Katayama S."/>
            <person name="Gough J."/>
            <person name="Frith M.C."/>
            <person name="Maeda N."/>
            <person name="Oyama R."/>
            <person name="Ravasi T."/>
            <person name="Lenhard B."/>
            <person name="Wells C."/>
            <person name="Kodzius R."/>
            <person name="Shimokawa K."/>
            <person name="Bajic V.B."/>
            <person name="Brenner S.E."/>
            <person name="Batalov S."/>
            <person name="Forrest A.R."/>
            <person name="Zavolan M."/>
            <person name="Davis M.J."/>
            <person name="Wilming L.G."/>
            <person name="Aidinis V."/>
            <person name="Allen J.E."/>
            <person name="Ambesi-Impiombato A."/>
            <person name="Apweiler R."/>
            <person name="Aturaliya R.N."/>
            <person name="Bailey T.L."/>
            <person name="Bansal M."/>
            <person name="Baxter L."/>
            <person name="Beisel K.W."/>
            <person name="Bersano T."/>
            <person name="Bono H."/>
            <person name="Chalk A.M."/>
            <person name="Chiu K.P."/>
            <person name="Choudhary V."/>
            <person name="Christoffels A."/>
            <person name="Clutterbuck D.R."/>
            <person name="Crowe M.L."/>
            <person name="Dalla E."/>
            <person name="Dalrymple B.P."/>
            <person name="de Bono B."/>
            <person name="Della Gatta G."/>
            <person name="di Bernardo D."/>
            <person name="Down T."/>
            <person name="Engstrom P."/>
            <person name="Fagiolini M."/>
            <person name="Faulkner G."/>
            <person name="Fletcher C.F."/>
            <person name="Fukushima T."/>
            <person name="Furuno M."/>
            <person name="Futaki S."/>
            <person name="Gariboldi M."/>
            <person name="Georgii-Hemming P."/>
            <person name="Gingeras T.R."/>
            <person name="Gojobori T."/>
            <person name="Green R.E."/>
            <person name="Gustincich S."/>
            <person name="Harbers M."/>
            <person name="Hayashi Y."/>
            <person name="Hensch T.K."/>
            <person name="Hirokawa N."/>
            <person name="Hill D."/>
            <person name="Huminiecki L."/>
            <person name="Iacono M."/>
            <person name="Ikeo K."/>
            <person name="Iwama A."/>
            <person name="Ishikawa T."/>
            <person name="Jakt M."/>
            <person name="Kanapin A."/>
            <person name="Katoh M."/>
            <person name="Kawasawa Y."/>
            <person name="Kelso J."/>
            <person name="Kitamura H."/>
            <person name="Kitano H."/>
            <person name="Kollias G."/>
            <person name="Krishnan S.P."/>
            <person name="Kruger A."/>
            <person name="Kummerfeld S.K."/>
            <person name="Kurochkin I.V."/>
            <person name="Lareau L.F."/>
            <person name="Lazarevic D."/>
            <person name="Lipovich L."/>
            <person name="Liu J."/>
            <person name="Liuni S."/>
            <person name="McWilliam S."/>
            <person name="Madan Babu M."/>
            <person name="Madera M."/>
            <person name="Marchionni L."/>
            <person name="Matsuda H."/>
            <person name="Matsuzawa S."/>
            <person name="Miki H."/>
            <person name="Mignone F."/>
            <person name="Miyake S."/>
            <person name="Morris K."/>
            <person name="Mottagui-Tabar S."/>
            <person name="Mulder N."/>
            <person name="Nakano N."/>
            <person name="Nakauchi H."/>
            <person name="Ng P."/>
            <person name="Nilsson R."/>
            <person name="Nishiguchi S."/>
            <person name="Nishikawa S."/>
            <person name="Nori F."/>
            <person name="Ohara O."/>
            <person name="Okazaki Y."/>
            <person name="Orlando V."/>
            <person name="Pang K.C."/>
            <person name="Pavan W.J."/>
            <person name="Pavesi G."/>
            <person name="Pesole G."/>
            <person name="Petrovsky N."/>
            <person name="Piazza S."/>
            <person name="Reed J."/>
            <person name="Reid J.F."/>
            <person name="Ring B.Z."/>
            <person name="Ringwald M."/>
            <person name="Rost B."/>
            <person name="Ruan Y."/>
            <person name="Salzberg S.L."/>
            <person name="Sandelin A."/>
            <person name="Schneider C."/>
            <person name="Schoenbach C."/>
            <person name="Sekiguchi K."/>
            <person name="Semple C.A."/>
            <person name="Seno S."/>
            <person name="Sessa L."/>
            <person name="Sheng Y."/>
            <person name="Shibata Y."/>
            <person name="Shimada H."/>
            <person name="Shimada K."/>
            <person name="Silva D."/>
            <person name="Sinclair B."/>
            <person name="Sperling S."/>
            <person name="Stupka E."/>
            <person name="Sugiura K."/>
            <person name="Sultana R."/>
            <person name="Takenaka Y."/>
            <person name="Taki K."/>
            <person name="Tammoja K."/>
            <person name="Tan S.L."/>
            <person name="Tang S."/>
            <person name="Taylor M.S."/>
            <person name="Tegner J."/>
            <person name="Teichmann S.A."/>
            <person name="Ueda H.R."/>
            <person name="van Nimwegen E."/>
            <person name="Verardo R."/>
            <person name="Wei C.L."/>
            <person name="Yagi K."/>
            <person name="Yamanishi H."/>
            <person name="Zabarovsky E."/>
            <person name="Zhu S."/>
            <person name="Zimmer A."/>
            <person name="Hide W."/>
            <person name="Bult C."/>
            <person name="Grimmond S.M."/>
            <person name="Teasdale R.D."/>
            <person name="Liu E.T."/>
            <person name="Brusic V."/>
            <person name="Quackenbush J."/>
            <person name="Wahlestedt C."/>
            <person name="Mattick J.S."/>
            <person name="Hume D.A."/>
            <person name="Kai C."/>
            <person name="Sasaki D."/>
            <person name="Tomaru Y."/>
            <person name="Fukuda S."/>
            <person name="Kanamori-Katayama M."/>
            <person name="Suzuki M."/>
            <person name="Aoki J."/>
            <person name="Arakawa T."/>
            <person name="Iida J."/>
            <person name="Imamura K."/>
            <person name="Itoh M."/>
            <person name="Kato T."/>
            <person name="Kawaji H."/>
            <person name="Kawagashira N."/>
            <person name="Kawashima T."/>
            <person name="Kojima M."/>
            <person name="Kondo S."/>
            <person name="Konno H."/>
            <person name="Nakano K."/>
            <person name="Ninomiya N."/>
            <person name="Nishio T."/>
            <person name="Okada M."/>
            <person name="Plessy C."/>
            <person name="Shibata K."/>
            <person name="Shiraki T."/>
            <person name="Suzuki S."/>
            <person name="Tagami M."/>
            <person name="Waki K."/>
            <person name="Watahiki A."/>
            <person name="Okamura-Oho Y."/>
            <person name="Suzuki H."/>
            <person name="Kawai J."/>
            <person name="Hayashizaki Y."/>
        </authorList>
    </citation>
    <scope>NUCLEOTIDE SEQUENCE [LARGE SCALE MRNA]</scope>
    <source>
        <strain>C57BL/6J</strain>
        <tissue>Egg</tissue>
    </source>
</reference>
<reference key="2">
    <citation type="journal article" date="2004" name="Genome Res.">
        <title>The status, quality, and expansion of the NIH full-length cDNA project: the Mammalian Gene Collection (MGC).</title>
        <authorList>
            <consortium name="The MGC Project Team"/>
        </authorList>
    </citation>
    <scope>NUCLEOTIDE SEQUENCE [LARGE SCALE MRNA] OF 173-658</scope>
    <source>
        <strain>FVB/N</strain>
        <tissue>Colon</tissue>
    </source>
</reference>
<reference key="3">
    <citation type="journal article" date="2013" name="Am. J. Hum. Genet.">
        <title>Splice-Site mutations in the axonemal outer dynein arm docking complex gene CCDC114 cause primary ciliary dyskinesia.</title>
        <authorList>
            <person name="Onoufriadis A."/>
            <person name="Paff T."/>
            <person name="Antony D."/>
            <person name="Shoemark A."/>
            <person name="Micha D."/>
            <person name="Kuyt B."/>
            <person name="Schmidts M."/>
            <person name="Petridi S."/>
            <person name="Dankert-Roelse J.E."/>
            <person name="Haarman E.G."/>
            <person name="Daniels J.M."/>
            <person name="Emes R.D."/>
            <person name="Wilson R."/>
            <person name="Hogg C."/>
            <person name="Scambler P.J."/>
            <person name="Chung E.M."/>
            <person name="Pals G."/>
            <person name="Mitchison H.M."/>
        </authorList>
    </citation>
    <scope>TISSUE SPECIFICITY</scope>
</reference>
<protein>
    <recommendedName>
        <fullName>Outer dynein arm-docking complex subunit 1</fullName>
    </recommendedName>
    <alternativeName>
        <fullName>Coiled-coil domain-containing protein 114</fullName>
    </alternativeName>
</protein>
<sequence>MMELERRAYSKEVHQRLRKQVEEIRQLEMLRAKLQTQINVAQSQVKRLGDKKHLAEMECLLKSRAQVQVEIEALQEQNRALDKQIQDWETHVLTQSKEASAPDLIMYQKMKIQRRIRILEDQLDRVTCHFDIHLVRNAALREELELLRIERGRYLNMDRKLKKEIHLLREMVGALSTSSTSAYTAREEAKTKMGMLQERAEKELAQSDTEAQILLRQISHLEQLHRFLKLKNDERQPDPRVVQKAEQRDWEVSEGLRKTSQEKLVLRYEDTLGKLAQLTGESDPDLLVEKYLELEERNFAEFNFINEQNSEIHHLQEEIKEMQEALVSEHASQDKQRMQQEQQCKMLQQDVDKMCSESEQLEGRFQVLRGQLEKIKTDIQVLFDKAKCDSSVIKDLLGVKTYMRDRDIGLFLSTIERRLVQLLTVQAFLQVQNLAPLADAALLALGQSLQEPSKKTTPLKPPDTMEDSSGAVIKEDYPMSKEELLSQVMKSLQLQDEEESAKKLDSSPSLTLSSPQISLVTVPKHSKKTSVVPESILSHKTNRGRGTGSVSHVTFGDSASAAGPVAMASASASGAPVSSRSSQGGRGGFKPTSSSSYLGSTGYLETSRGRESTAGGVHSQSMGSELSRGLSSSSGHASSPAPPSRPSSSTSKDSRGYN</sequence>
<accession>Q3UX62</accession>
<accession>Q91WT0</accession>
<evidence type="ECO:0000250" key="1">
    <source>
        <dbReference type="UniProtKB" id="B1H228"/>
    </source>
</evidence>
<evidence type="ECO:0000250" key="2">
    <source>
        <dbReference type="UniProtKB" id="F1N2N9"/>
    </source>
</evidence>
<evidence type="ECO:0000250" key="3">
    <source>
        <dbReference type="UniProtKB" id="Q96M63"/>
    </source>
</evidence>
<evidence type="ECO:0000255" key="4"/>
<evidence type="ECO:0000256" key="5">
    <source>
        <dbReference type="SAM" id="MobiDB-lite"/>
    </source>
</evidence>
<evidence type="ECO:0000269" key="6">
    <source>
    </source>
</evidence>
<evidence type="ECO:0000305" key="7"/>
<evidence type="ECO:0000312" key="8">
    <source>
        <dbReference type="MGI" id="MGI:2446120"/>
    </source>
</evidence>
<organism>
    <name type="scientific">Mus musculus</name>
    <name type="common">Mouse</name>
    <dbReference type="NCBI Taxonomy" id="10090"/>
    <lineage>
        <taxon>Eukaryota</taxon>
        <taxon>Metazoa</taxon>
        <taxon>Chordata</taxon>
        <taxon>Craniata</taxon>
        <taxon>Vertebrata</taxon>
        <taxon>Euteleostomi</taxon>
        <taxon>Mammalia</taxon>
        <taxon>Eutheria</taxon>
        <taxon>Euarchontoglires</taxon>
        <taxon>Glires</taxon>
        <taxon>Rodentia</taxon>
        <taxon>Myomorpha</taxon>
        <taxon>Muroidea</taxon>
        <taxon>Muridae</taxon>
        <taxon>Murinae</taxon>
        <taxon>Mus</taxon>
        <taxon>Mus</taxon>
    </lineage>
</organism>
<feature type="chain" id="PRO_0000288808" description="Outer dynein arm-docking complex subunit 1">
    <location>
        <begin position="1"/>
        <end position="658"/>
    </location>
</feature>
<feature type="region of interest" description="Disordered" evidence="5">
    <location>
        <begin position="496"/>
        <end position="552"/>
    </location>
</feature>
<feature type="region of interest" description="Disordered" evidence="5">
    <location>
        <begin position="574"/>
        <end position="658"/>
    </location>
</feature>
<feature type="coiled-coil region" evidence="4">
    <location>
        <begin position="11"/>
        <end position="156"/>
    </location>
</feature>
<feature type="coiled-coil region" evidence="4">
    <location>
        <begin position="186"/>
        <end position="234"/>
    </location>
</feature>
<feature type="coiled-coil region" evidence="4">
    <location>
        <begin position="303"/>
        <end position="380"/>
    </location>
</feature>
<feature type="compositionally biased region" description="Low complexity" evidence="5">
    <location>
        <begin position="506"/>
        <end position="519"/>
    </location>
</feature>
<feature type="compositionally biased region" description="Low complexity" evidence="5">
    <location>
        <begin position="574"/>
        <end position="583"/>
    </location>
</feature>
<feature type="compositionally biased region" description="Low complexity" evidence="5">
    <location>
        <begin position="592"/>
        <end position="604"/>
    </location>
</feature>
<feature type="compositionally biased region" description="Low complexity" evidence="5">
    <location>
        <begin position="621"/>
        <end position="639"/>
    </location>
</feature>
<feature type="modified residue" description="Phosphoserine" evidence="1">
    <location>
        <position position="500"/>
    </location>
</feature>
<feature type="modified residue" description="Phosphoserine" evidence="1">
    <location>
        <position position="506"/>
    </location>
</feature>
<feature type="modified residue" description="Phosphoserine" evidence="1">
    <location>
        <position position="507"/>
    </location>
</feature>
<feature type="modified residue" description="Phosphoserine" evidence="1">
    <location>
        <position position="509"/>
    </location>
</feature>
<dbReference type="EMBL" id="AK135860">
    <property type="protein sequence ID" value="BAE22701.1"/>
    <property type="molecule type" value="mRNA"/>
</dbReference>
<dbReference type="EMBL" id="BC013491">
    <property type="protein sequence ID" value="AAH13491.1"/>
    <property type="molecule type" value="mRNA"/>
</dbReference>
<dbReference type="RefSeq" id="NP_001028415.1">
    <property type="nucleotide sequence ID" value="NM_001033243.2"/>
</dbReference>
<dbReference type="SMR" id="Q3UX62"/>
<dbReference type="BioGRID" id="229242">
    <property type="interactions" value="3"/>
</dbReference>
<dbReference type="FunCoup" id="Q3UX62">
    <property type="interactions" value="76"/>
</dbReference>
<dbReference type="STRING" id="10090.ENSMUSP00000042772"/>
<dbReference type="iPTMnet" id="Q3UX62"/>
<dbReference type="PhosphoSitePlus" id="Q3UX62"/>
<dbReference type="PaxDb" id="10090-ENSMUSP00000042772"/>
<dbReference type="ProteomicsDB" id="265576"/>
<dbReference type="DNASU" id="211535"/>
<dbReference type="Ensembl" id="ENSMUST00000038720.8">
    <property type="protein sequence ID" value="ENSMUSP00000042772.5"/>
    <property type="gene ID" value="ENSMUSG00000040189.19"/>
</dbReference>
<dbReference type="UCSC" id="uc009gxz.1">
    <property type="organism name" value="mouse"/>
</dbReference>
<dbReference type="AGR" id="MGI:2446120"/>
<dbReference type="MGI" id="MGI:2446120">
    <property type="gene designation" value="Odad1"/>
</dbReference>
<dbReference type="VEuPathDB" id="HostDB:ENSMUSG00000040189"/>
<dbReference type="eggNOG" id="ENOG502QSIU">
    <property type="taxonomic scope" value="Eukaryota"/>
</dbReference>
<dbReference type="GeneTree" id="ENSGT00950000183364"/>
<dbReference type="HOGENOM" id="CLU_027546_3_1_1"/>
<dbReference type="InParanoid" id="Q3UX62"/>
<dbReference type="OMA" id="MRCEDAM"/>
<dbReference type="PhylomeDB" id="Q3UX62"/>
<dbReference type="TreeFam" id="TF323742"/>
<dbReference type="BioGRID-ORCS" id="211535">
    <property type="hits" value="0 hits in 78 CRISPR screens"/>
</dbReference>
<dbReference type="ChiTaRS" id="Ccdc114">
    <property type="organism name" value="mouse"/>
</dbReference>
<dbReference type="PRO" id="PR:Q3UX62"/>
<dbReference type="Proteomes" id="UP000000589">
    <property type="component" value="Chromosome 7"/>
</dbReference>
<dbReference type="RNAct" id="Q3UX62">
    <property type="molecule type" value="protein"/>
</dbReference>
<dbReference type="Bgee" id="ENSMUSG00000040189">
    <property type="expression patterns" value="Expressed in choroid plexus of lateral ventricle and 84 other cell types or tissues"/>
</dbReference>
<dbReference type="ExpressionAtlas" id="Q3UX62">
    <property type="expression patterns" value="baseline and differential"/>
</dbReference>
<dbReference type="GO" id="GO:0005929">
    <property type="term" value="C:cilium"/>
    <property type="evidence" value="ECO:0000250"/>
    <property type="project" value="UniProtKB"/>
</dbReference>
<dbReference type="GO" id="GO:0036157">
    <property type="term" value="C:outer dynein arm"/>
    <property type="evidence" value="ECO:0000250"/>
    <property type="project" value="UniProtKB"/>
</dbReference>
<dbReference type="GO" id="GO:0120228">
    <property type="term" value="C:outer dynein arm docking complex"/>
    <property type="evidence" value="ECO:0000250"/>
    <property type="project" value="UniProtKB"/>
</dbReference>
<dbReference type="GO" id="GO:0003341">
    <property type="term" value="P:cilium movement"/>
    <property type="evidence" value="ECO:0000250"/>
    <property type="project" value="UniProtKB"/>
</dbReference>
<dbReference type="GO" id="GO:0036158">
    <property type="term" value="P:outer dynein arm assembly"/>
    <property type="evidence" value="ECO:0000250"/>
    <property type="project" value="UniProtKB"/>
</dbReference>
<dbReference type="InterPro" id="IPR051876">
    <property type="entry name" value="ODA-DC/CCD"/>
</dbReference>
<dbReference type="InterPro" id="IPR049258">
    <property type="entry name" value="ODAD1_CC"/>
</dbReference>
<dbReference type="PANTHER" id="PTHR21694">
    <property type="entry name" value="COILED-COIL DOMAIN-CONTAINING PROTEIN 63"/>
    <property type="match status" value="1"/>
</dbReference>
<dbReference type="PANTHER" id="PTHR21694:SF35">
    <property type="entry name" value="OUTER DYNEIN ARM-DOCKING COMPLEX SUBUNIT 1"/>
    <property type="match status" value="1"/>
</dbReference>
<dbReference type="Pfam" id="PF21773">
    <property type="entry name" value="ODAD1_CC"/>
    <property type="match status" value="1"/>
</dbReference>
<proteinExistence type="evidence at transcript level"/>
<comment type="function">
    <text evidence="2 3">Component of the outer dynein arm-docking complex that mediates outer dynein arms (ODA) binding onto the doublet microtubule. Involved in mediating assembly of both ODAs and their axonemal docking complex onto ciliary microtubules (By similarity).</text>
</comment>
<comment type="subunit">
    <text evidence="2 3">Component of the outer dynein arm-docking complex along with ODAD2, ODAD3, ODAD4 and CLXN. Interacts with ODAD3. Interacts with ODAD4; this interaction may facilitate the recruitment and/or attachment of outer dynein arm docking complex proteins including ODAD1, ODAD3, and ODAD4 to ciliary axonemes. Interacts with DNAH9. Interacts with MNS1 (By similarity). Interacts with PIERCE1 and PIERCE2; the interactions link the outer dynein arms docking complex (ODA-DC) to the internal microtubule inner proteins (MIP) in cilium axoneme (By similarity).</text>
</comment>
<comment type="subcellular location">
    <subcellularLocation>
        <location evidence="3">Cytoplasm</location>
        <location evidence="3">Cytoskeleton</location>
        <location evidence="3">Cilium axoneme</location>
    </subcellularLocation>
</comment>
<comment type="tissue specificity">
    <text evidence="6">Expressed in motile ciliated tissues.</text>
</comment>
<comment type="similarity">
    <text evidence="7">Belongs to the ODA1/DCC2 family.</text>
</comment>
<keyword id="KW-0966">Cell projection</keyword>
<keyword id="KW-0969">Cilium</keyword>
<keyword id="KW-0175">Coiled coil</keyword>
<keyword id="KW-0963">Cytoplasm</keyword>
<keyword id="KW-0206">Cytoskeleton</keyword>
<keyword id="KW-0597">Phosphoprotein</keyword>
<keyword id="KW-1185">Reference proteome</keyword>
<gene>
    <name type="primary">Odad1</name>
    <name evidence="8" type="synonym">Ccdc114</name>
</gene>
<name>ODAD1_MOUSE</name>